<reference key="1">
    <citation type="journal article" date="1998" name="Biochem. J.">
        <title>Two oligopeptide transporters from Caenorhabditis elegans: molecular cloning and functional expression.</title>
        <authorList>
            <person name="Fei Y.-J."/>
            <person name="Fujita T."/>
            <person name="Lapp D.F."/>
            <person name="Ganapathy V."/>
            <person name="Leibach F.H."/>
        </authorList>
    </citation>
    <scope>NUCLEOTIDE SEQUENCE [MRNA]</scope>
    <scope>FUNCTION</scope>
    <scope>DEVELOPMENTAL STAGE</scope>
    <source>
        <strain>Bristol N2</strain>
    </source>
</reference>
<reference key="2">
    <citation type="journal article" date="1998" name="Science">
        <title>Genome sequence of the nematode C. elegans: a platform for investigating biology.</title>
        <authorList>
            <consortium name="The C. elegans sequencing consortium"/>
        </authorList>
    </citation>
    <scope>NUCLEOTIDE SEQUENCE [LARGE SCALE GENOMIC DNA]</scope>
    <source>
        <strain>Bristol N2</strain>
    </source>
</reference>
<reference key="3">
    <citation type="journal article" date="2003" name="J. Biol. Chem.">
        <title>A reduction in intestinal cell pHi due to loss of the Caenorhabditis elegans Na+/H+ exchanger NHX-2 increases life span.</title>
        <authorList>
            <person name="Nehrke K."/>
        </authorList>
    </citation>
    <scope>FUNCTION</scope>
    <scope>SUBCELLULAR LOCATION</scope>
    <scope>TISSUE SPECIFICITY</scope>
    <scope>DISRUPTION PHENOTYPE</scope>
</reference>
<reference key="4">
    <citation type="journal article" date="2004" name="J. Biol. Chem.">
        <title>Deletion of the intestinal peptide transporter affects insulin and TOR signaling in Caenorhabditis elegans.</title>
        <authorList>
            <person name="Meissner B."/>
            <person name="Boll M."/>
            <person name="Daniel H."/>
            <person name="Baumeister R."/>
        </authorList>
    </citation>
    <scope>FUNCTION</scope>
    <scope>DISRUPTION PHENOTYPE</scope>
</reference>
<reference key="5">
    <citation type="journal article" date="2008" name="Genes Dev.">
        <title>A branched-chain fatty acid is involved in post-embryonic growth control in parallel to the insulin receptor pathway and its biosynthesis is feedback-regulated in C. elegans.</title>
        <authorList>
            <person name="Kniazeva M."/>
            <person name="Euler T."/>
            <person name="Han M."/>
        </authorList>
    </citation>
    <scope>DISRUPTION PHENOTYPE</scope>
</reference>
<reference key="6">
    <citation type="journal article" date="2009" name="PLoS ONE">
        <title>How the intestinal peptide transporter PEPT-1 contributes to an obesity phenotype in Caenorhabditits elegans.</title>
        <authorList>
            <person name="Spanier B."/>
            <person name="Lasch K."/>
            <person name="Marsch S."/>
            <person name="Benner J."/>
            <person name="Liao W."/>
            <person name="Hu H."/>
            <person name="Kienberger H."/>
            <person name="Eisenreich W."/>
            <person name="Daniel H."/>
        </authorList>
    </citation>
    <scope>FUNCTION</scope>
    <scope>DISRUPTION PHENOTYPE</scope>
</reference>
<reference key="7">
    <citation type="journal article" date="2009" name="PLoS ONE">
        <title>The influence of bacterial diet on fat storage in C. elegans.</title>
        <authorList>
            <person name="Brooks K.K."/>
            <person name="Liang B."/>
            <person name="Watts J.L."/>
        </authorList>
    </citation>
    <scope>DISRUPTION PHENOTYPE</scope>
</reference>
<reference key="8">
    <citation type="journal article" date="2010" name="Aging Cell">
        <title>Altered signalling from germline to intestine pushes daf-2;pept-1 Caenorhabditis elegans into extreme longevity.</title>
        <authorList>
            <person name="Spanier B."/>
            <person name="Rubio-Aliaga I."/>
            <person name="Hu H."/>
            <person name="Daniel H."/>
        </authorList>
    </citation>
    <scope>FUNCTION</scope>
    <scope>DISRUPTION PHENOTYPE</scope>
</reference>
<reference key="9">
    <citation type="journal article" date="2011" name="J. Proteome Res.">
        <title>Metabotyping of Caenorhabditis elegans and their culture media revealed unique metabolic phenotypes associated to amino acid deficiency and insulin-like signaling.</title>
        <authorList>
            <person name="Martin F.P."/>
            <person name="Spanier B."/>
            <person name="Collino S."/>
            <person name="Montoliu I."/>
            <person name="Kolmeder C."/>
            <person name="Giesbertz P."/>
            <person name="Affolter M."/>
            <person name="Kussmann M."/>
            <person name="Daniel H."/>
            <person name="Kochhar S."/>
            <person name="Rezzi S."/>
        </authorList>
    </citation>
    <scope>FUNCTION</scope>
</reference>
<reference key="10">
    <citation type="journal article" date="2011" name="PLoS ONE">
        <title>A glutathione peroxidase, intracellular peptidases and the TOR complexes regulate peptide transporter PEPT-1 in C. elegans.</title>
        <authorList>
            <person name="Benner J."/>
            <person name="Daniel H."/>
            <person name="Spanier B."/>
        </authorList>
    </citation>
    <scope>FUNCTION</scope>
    <scope>SUBCELLULAR LOCATION</scope>
</reference>
<reference key="11">
    <citation type="journal article" date="2018" name="Front. Mol. Biosci.">
        <title>The Reproduction Rate of Peptide Transporter PEPT-1 Deficient C. elegans Is Dependent on Dietary Glutamate Supply.</title>
        <authorList>
            <person name="Spanier B."/>
            <person name="Wallwitz J."/>
            <person name="Zapoglou D."/>
            <person name="Idrissou B.M.G."/>
            <person name="Fischer C."/>
            <person name="Troll M."/>
            <person name="Petzold K."/>
            <person name="Daniel H."/>
        </authorList>
    </citation>
    <scope>FUNCTION</scope>
</reference>
<gene>
    <name evidence="15" type="primary">pept-1</name>
    <name evidence="13" type="synonym">cptb</name>
    <name evidence="15" type="synonym">opt-2</name>
    <name evidence="15" type="synonym">pep-2</name>
    <name evidence="15" type="ORF">K04E7.2</name>
</gene>
<protein>
    <recommendedName>
        <fullName>Peptide transporter family 1</fullName>
    </recommendedName>
    <alternativeName>
        <fullName>Di-/tri-peptide transporter CPTB</fullName>
    </alternativeName>
    <alternativeName>
        <fullName>Oligopeptide transporter 1</fullName>
    </alternativeName>
</protein>
<feature type="chain" id="PRO_0000064314" description="Peptide transporter family 1">
    <location>
        <begin position="1"/>
        <end position="835"/>
    </location>
</feature>
<feature type="transmembrane region" description="Helical" evidence="1">
    <location>
        <begin position="86"/>
        <end position="106"/>
    </location>
</feature>
<feature type="transmembrane region" description="Helical" evidence="1">
    <location>
        <begin position="113"/>
        <end position="133"/>
    </location>
</feature>
<feature type="transmembrane region" description="Helical" evidence="1">
    <location>
        <begin position="150"/>
        <end position="170"/>
    </location>
</feature>
<feature type="transmembrane region" description="Helical" evidence="1">
    <location>
        <begin position="183"/>
        <end position="203"/>
    </location>
</feature>
<feature type="transmembrane region" description="Helical" evidence="1">
    <location>
        <begin position="222"/>
        <end position="242"/>
    </location>
</feature>
<feature type="transmembrane region" description="Helical" evidence="1">
    <location>
        <begin position="325"/>
        <end position="345"/>
    </location>
</feature>
<feature type="transmembrane region" description="Helical" evidence="1">
    <location>
        <begin position="368"/>
        <end position="388"/>
    </location>
</feature>
<feature type="transmembrane region" description="Helical" evidence="1">
    <location>
        <begin position="401"/>
        <end position="421"/>
    </location>
</feature>
<feature type="transmembrane region" description="Helical" evidence="1">
    <location>
        <begin position="697"/>
        <end position="717"/>
    </location>
</feature>
<feature type="transmembrane region" description="Helical" evidence="1">
    <location>
        <begin position="738"/>
        <end position="758"/>
    </location>
</feature>
<feature type="transmembrane region" description="Helical" evidence="1">
    <location>
        <begin position="765"/>
        <end position="785"/>
    </location>
</feature>
<feature type="region of interest" description="Disordered" evidence="2">
    <location>
        <begin position="814"/>
        <end position="835"/>
    </location>
</feature>
<feature type="compositionally biased region" description="Basic and acidic residues" evidence="2">
    <location>
        <begin position="821"/>
        <end position="835"/>
    </location>
</feature>
<accession>Q21219</accession>
<accession>O76186</accession>
<name>PEPT1_CAEEL</name>
<proteinExistence type="evidence at transcript level"/>
<organism>
    <name type="scientific">Caenorhabditis elegans</name>
    <dbReference type="NCBI Taxonomy" id="6239"/>
    <lineage>
        <taxon>Eukaryota</taxon>
        <taxon>Metazoa</taxon>
        <taxon>Ecdysozoa</taxon>
        <taxon>Nematoda</taxon>
        <taxon>Chromadorea</taxon>
        <taxon>Rhabditida</taxon>
        <taxon>Rhabditina</taxon>
        <taxon>Rhabditomorpha</taxon>
        <taxon>Rhabditoidea</taxon>
        <taxon>Rhabditidae</taxon>
        <taxon>Peloderinae</taxon>
        <taxon>Caenorhabditis</taxon>
    </lineage>
</organism>
<evidence type="ECO:0000255" key="1"/>
<evidence type="ECO:0000256" key="2">
    <source>
        <dbReference type="SAM" id="MobiDB-lite"/>
    </source>
</evidence>
<evidence type="ECO:0000269" key="3">
    <source>
    </source>
</evidence>
<evidence type="ECO:0000269" key="4">
    <source>
    </source>
</evidence>
<evidence type="ECO:0000269" key="5">
    <source>
    </source>
</evidence>
<evidence type="ECO:0000269" key="6">
    <source>
    </source>
</evidence>
<evidence type="ECO:0000269" key="7">
    <source>
    </source>
</evidence>
<evidence type="ECO:0000269" key="8">
    <source>
    </source>
</evidence>
<evidence type="ECO:0000269" key="9">
    <source>
    </source>
</evidence>
<evidence type="ECO:0000269" key="10">
    <source>
    </source>
</evidence>
<evidence type="ECO:0000269" key="11">
    <source>
    </source>
</evidence>
<evidence type="ECO:0000269" key="12">
    <source>
    </source>
</evidence>
<evidence type="ECO:0000303" key="13">
    <source>
    </source>
</evidence>
<evidence type="ECO:0000305" key="14"/>
<evidence type="ECO:0000312" key="15">
    <source>
        <dbReference type="WormBase" id="K04E7.2"/>
    </source>
</evidence>
<sequence length="835" mass="94109">MGYSESRSESVSSKGKTSYGHELETVPLPEKKIYTTWPDMIRHWPKTTLCIVSNEFCERFSYYGMRTVLTFYLLNVLKFTDSQSTIFFNGFTVLCYTTPLLGSIVADGYIGKFWTIFSVSILYAIGQVVLALASTKNFQSSVHPWMDLSGLLIIAFGTGGIKPCVSAFGGDQFELGQERMLSLFFSMFYFSINAGSMISTFISPIFRSQPCLGQDSCYPMAFGIPAILMIVATLVFMGGSFWYKKNPPKDNVFGEVSRLMFRAVGNKMKSGSTPKEHWLLHYLTTHDCALDAKCLELQAEKRNKNLCQKKKFIDDVRSLLRVLVMFLPVPMFWALYDQQGSVWLIQAIQMDCRLSDTLLLLPDQMQTLNAVLILLFIPLFQVIIYPVAAKCVRLTPLRKMVTGGLLASLAFLITGFVQLQVNTTLPTLPEEGEASISFWNQFETDCTITVMSGIHKRVLPHDKYLHEDKKNKSGIYNLFTTKSPAKGNGDWTLTYDLSYDGACGDTSKLEKTVKVTAKSKKIIYVGVGSFGYYQNTANTDKPTDGTGEFSMGIVTVFNSSYGGNFAMCRQNTSDFDVNHPCNPRHPADFYFWETDYNSHTDDRDQNATITGSLSSQPAVTYKQKSVKPGYWQLYYLLNTPKDVDRQTYNKTATLVAPTNYGFHRVKQGGVFIYALTGTYENPKIHELQIVQSNSVSILWQIPQIVVITAAEILFSITGYEFAYSQSAPSMKALVQALWLLTTAAGDSIIVVITILNLFENMAVEFFVYAAAMFVVIAIFALLSIFYYTYNYYTTDEEDGEIGVDDEEEIEDHNPRYSIDNKGFHPDEKDTFDMHF</sequence>
<comment type="function">
    <text evidence="3 4 6 8 9 10 11 12">Low-affinity peptide transporter that is necessary for proton-dependent uptake of di- or tripeptides, and to a minor extent tetrapeptides, in the intestine. Transport is independent of sodium and chloride ions. Controls the uptake of dietary fatty acids, plays a role in fatty acid synthesis and is responsible for dipeptide-induced acidification of the intestine. Regulates cellular pH differences together with the antiporter protein, nhx-2. Amino acid uptake and absorption levels influence the insulin signaling/daf-2 and let-363/TOR pathways, subsequently affecting the stress response and longevity of the organism. It is required for the uptake of the L-enantiomers of various amino acids, including L-glutamate (PubMed:30560135). In response to the availability of amino acid nutrients, may play a role in promoting reproduction and fertility (PubMed:30560135).</text>
</comment>
<comment type="subcellular location">
    <subcellularLocation>
        <location evidence="3 10">Apical cell membrane</location>
        <topology evidence="3 10">Multi-pass membrane protein</topology>
    </subcellularLocation>
    <text>Colocalizes with nhx-2 along the apical membrane of the intestinal cells.</text>
</comment>
<comment type="tissue specificity">
    <text evidence="3">Expressed specifically in the intestine.</text>
</comment>
<comment type="developmental stage">
    <text evidence="12">Biphasic expression pattern observed. Gradual increase in expression during development from embryo through to adult with a decrease during larva stages 1 and 2.</text>
</comment>
<comment type="disruption phenotype">
    <text evidence="3 4 5 6 7 8">Mutant worms have decreased body size, high fat stores, increased uptake of fatty acids, reduced brood size, retarded postembryonic growth, extended reproductive life span and increased resistance to stress. RNAi-mediated knockdown of the protein results in impaired synthesis of long-chain and polyunsaturated fatty acids. Pharyngeal pumping rate is similar to wild type but simultaneous knockdown with nhx-2 results in reduced rate of pharyngeal pumping and slightly higher acidic intestinal pH.</text>
</comment>
<comment type="similarity">
    <text evidence="14">Belongs to the major facilitator superfamily. Proton-dependent oligopeptide transporter (POT/PTR) (TC 2.A.17) family.</text>
</comment>
<comment type="sequence caution" evidence="14">
    <conflict type="frameshift">
        <sequence resource="EMBL-CDS" id="AAC39119"/>
    </conflict>
</comment>
<keyword id="KW-1003">Cell membrane</keyword>
<keyword id="KW-0472">Membrane</keyword>
<keyword id="KW-0571">Peptide transport</keyword>
<keyword id="KW-0653">Protein transport</keyword>
<keyword id="KW-1185">Reference proteome</keyword>
<keyword id="KW-0812">Transmembrane</keyword>
<keyword id="KW-1133">Transmembrane helix</keyword>
<keyword id="KW-0813">Transport</keyword>
<dbReference type="EMBL" id="AF000418">
    <property type="protein sequence ID" value="AAC39119.1"/>
    <property type="status" value="ALT_FRAME"/>
    <property type="molecule type" value="mRNA"/>
</dbReference>
<dbReference type="EMBL" id="BX284606">
    <property type="protein sequence ID" value="CCD64583.1"/>
    <property type="molecule type" value="Genomic_DNA"/>
</dbReference>
<dbReference type="PIR" id="E89551">
    <property type="entry name" value="E89551"/>
</dbReference>
<dbReference type="PIR" id="T37330">
    <property type="entry name" value="T37330"/>
</dbReference>
<dbReference type="RefSeq" id="NP_509087.1">
    <property type="nucleotide sequence ID" value="NM_076686.7"/>
</dbReference>
<dbReference type="SMR" id="Q21219"/>
<dbReference type="BioGRID" id="45849">
    <property type="interactions" value="6"/>
</dbReference>
<dbReference type="FunCoup" id="Q21219">
    <property type="interactions" value="344"/>
</dbReference>
<dbReference type="STRING" id="6239.K04E7.2.1"/>
<dbReference type="TCDB" id="2.A.17.4.11">
    <property type="family name" value="the proton-dependent oligopeptide transporter (pot/ptr) family"/>
</dbReference>
<dbReference type="iPTMnet" id="Q21219"/>
<dbReference type="PaxDb" id="6239-K04E7.2.1"/>
<dbReference type="PeptideAtlas" id="Q21219"/>
<dbReference type="EnsemblMetazoa" id="K04E7.2.1">
    <property type="protein sequence ID" value="K04E7.2.1"/>
    <property type="gene ID" value="WBGene00003877"/>
</dbReference>
<dbReference type="GeneID" id="180919"/>
<dbReference type="KEGG" id="cel:CELE_K04E7.2"/>
<dbReference type="UCSC" id="K04E7.2.2">
    <property type="organism name" value="c. elegans"/>
</dbReference>
<dbReference type="AGR" id="WB:WBGene00003877"/>
<dbReference type="CTD" id="180919"/>
<dbReference type="WormBase" id="K04E7.2">
    <property type="protein sequence ID" value="CE25039"/>
    <property type="gene ID" value="WBGene00003877"/>
    <property type="gene designation" value="pept-1"/>
</dbReference>
<dbReference type="eggNOG" id="KOG1237">
    <property type="taxonomic scope" value="Eukaryota"/>
</dbReference>
<dbReference type="GeneTree" id="ENSGT00940000165486"/>
<dbReference type="HOGENOM" id="CLU_004790_3_0_1"/>
<dbReference type="InParanoid" id="Q21219"/>
<dbReference type="OMA" id="WQIPQIV"/>
<dbReference type="OrthoDB" id="205993at2759"/>
<dbReference type="PhylomeDB" id="Q21219"/>
<dbReference type="Reactome" id="R-CEL-427975">
    <property type="pathway name" value="Proton/oligopeptide cotransporters"/>
</dbReference>
<dbReference type="PRO" id="PR:Q21219"/>
<dbReference type="Proteomes" id="UP000001940">
    <property type="component" value="Chromosome X"/>
</dbReference>
<dbReference type="Bgee" id="WBGene00003877">
    <property type="expression patterns" value="Expressed in larva and 4 other cell types or tissues"/>
</dbReference>
<dbReference type="GO" id="GO:0016324">
    <property type="term" value="C:apical plasma membrane"/>
    <property type="evidence" value="ECO:0000314"/>
    <property type="project" value="WormBase"/>
</dbReference>
<dbReference type="GO" id="GO:0005886">
    <property type="term" value="C:plasma membrane"/>
    <property type="evidence" value="ECO:0000318"/>
    <property type="project" value="GO_Central"/>
</dbReference>
<dbReference type="GO" id="GO:0071916">
    <property type="term" value="F:dipeptide transmembrane transporter activity"/>
    <property type="evidence" value="ECO:0000315"/>
    <property type="project" value="WormBase"/>
</dbReference>
<dbReference type="GO" id="GO:0008340">
    <property type="term" value="P:determination of adult lifespan"/>
    <property type="evidence" value="ECO:0000316"/>
    <property type="project" value="WormBase"/>
</dbReference>
<dbReference type="GO" id="GO:0140206">
    <property type="term" value="P:dipeptide import across plasma membrane"/>
    <property type="evidence" value="ECO:0000318"/>
    <property type="project" value="GO_Central"/>
</dbReference>
<dbReference type="GO" id="GO:0042938">
    <property type="term" value="P:dipeptide transport"/>
    <property type="evidence" value="ECO:0000315"/>
    <property type="project" value="WormBase"/>
</dbReference>
<dbReference type="GO" id="GO:0080144">
    <property type="term" value="P:intracellular amino acid homeostasis"/>
    <property type="evidence" value="ECO:0000315"/>
    <property type="project" value="UniProtKB"/>
</dbReference>
<dbReference type="GO" id="GO:0015807">
    <property type="term" value="P:L-amino acid transport"/>
    <property type="evidence" value="ECO:0000315"/>
    <property type="project" value="UniProtKB"/>
</dbReference>
<dbReference type="GO" id="GO:0019915">
    <property type="term" value="P:lipid storage"/>
    <property type="evidence" value="ECO:0000315"/>
    <property type="project" value="WormBase"/>
</dbReference>
<dbReference type="GO" id="GO:2000192">
    <property type="term" value="P:negative regulation of fatty acid transport"/>
    <property type="evidence" value="ECO:0000315"/>
    <property type="project" value="WormBase"/>
</dbReference>
<dbReference type="GO" id="GO:0002119">
    <property type="term" value="P:nematode larval development"/>
    <property type="evidence" value="ECO:0000315"/>
    <property type="project" value="WormBase"/>
</dbReference>
<dbReference type="GO" id="GO:0040010">
    <property type="term" value="P:positive regulation of growth rate"/>
    <property type="evidence" value="ECO:0000315"/>
    <property type="project" value="WormBase"/>
</dbReference>
<dbReference type="GO" id="GO:0040018">
    <property type="term" value="P:positive regulation of multicellular organism growth"/>
    <property type="evidence" value="ECO:0000315"/>
    <property type="project" value="WormBase"/>
</dbReference>
<dbReference type="GO" id="GO:0015031">
    <property type="term" value="P:protein transport"/>
    <property type="evidence" value="ECO:0007669"/>
    <property type="project" value="UniProtKB-KW"/>
</dbReference>
<dbReference type="GO" id="GO:0060378">
    <property type="term" value="P:regulation of brood size"/>
    <property type="evidence" value="ECO:0000315"/>
    <property type="project" value="UniProtKB"/>
</dbReference>
<dbReference type="GO" id="GO:1900101">
    <property type="term" value="P:regulation of endoplasmic reticulum unfolded protein response"/>
    <property type="evidence" value="ECO:0000315"/>
    <property type="project" value="WormBase"/>
</dbReference>
<dbReference type="GO" id="GO:0006885">
    <property type="term" value="P:regulation of pH"/>
    <property type="evidence" value="ECO:0000316"/>
    <property type="project" value="WormBase"/>
</dbReference>
<dbReference type="GO" id="GO:0032006">
    <property type="term" value="P:regulation of TOR signaling"/>
    <property type="evidence" value="ECO:0000315"/>
    <property type="project" value="WormBase"/>
</dbReference>
<dbReference type="GO" id="GO:0022414">
    <property type="term" value="P:reproductive process"/>
    <property type="evidence" value="ECO:0000315"/>
    <property type="project" value="WormBase"/>
</dbReference>
<dbReference type="GO" id="GO:0009408">
    <property type="term" value="P:response to heat"/>
    <property type="evidence" value="ECO:0000315"/>
    <property type="project" value="WormBase"/>
</dbReference>
<dbReference type="GO" id="GO:0006979">
    <property type="term" value="P:response to oxidative stress"/>
    <property type="evidence" value="ECO:0000315"/>
    <property type="project" value="WormBase"/>
</dbReference>
<dbReference type="CDD" id="cd17347">
    <property type="entry name" value="MFS_SLC15A1_2_like"/>
    <property type="match status" value="1"/>
</dbReference>
<dbReference type="FunFam" id="1.20.1250.20:FF:000537">
    <property type="entry name" value="Peptide transporter family 2"/>
    <property type="match status" value="1"/>
</dbReference>
<dbReference type="FunFam" id="1.20.1250.20:FF:000049">
    <property type="entry name" value="Solute carrier family 15 member 2"/>
    <property type="match status" value="1"/>
</dbReference>
<dbReference type="Gene3D" id="1.20.1250.20">
    <property type="entry name" value="MFS general substrate transporter like domains"/>
    <property type="match status" value="2"/>
</dbReference>
<dbReference type="InterPro" id="IPR036259">
    <property type="entry name" value="MFS_trans_sf"/>
</dbReference>
<dbReference type="InterPro" id="IPR004768">
    <property type="entry name" value="Oligopep_transport"/>
</dbReference>
<dbReference type="InterPro" id="IPR000109">
    <property type="entry name" value="POT_fam"/>
</dbReference>
<dbReference type="InterPro" id="IPR018456">
    <property type="entry name" value="PTR2_symporter_CS"/>
</dbReference>
<dbReference type="NCBIfam" id="TIGR00926">
    <property type="entry name" value="2A1704"/>
    <property type="match status" value="1"/>
</dbReference>
<dbReference type="PANTHER" id="PTHR11654">
    <property type="entry name" value="OLIGOPEPTIDE TRANSPORTER-RELATED"/>
    <property type="match status" value="1"/>
</dbReference>
<dbReference type="Pfam" id="PF00854">
    <property type="entry name" value="PTR2"/>
    <property type="match status" value="2"/>
</dbReference>
<dbReference type="SUPFAM" id="SSF103473">
    <property type="entry name" value="MFS general substrate transporter"/>
    <property type="match status" value="1"/>
</dbReference>
<dbReference type="PROSITE" id="PS01022">
    <property type="entry name" value="PTR2_1"/>
    <property type="match status" value="1"/>
</dbReference>
<dbReference type="PROSITE" id="PS01023">
    <property type="entry name" value="PTR2_2"/>
    <property type="match status" value="1"/>
</dbReference>